<proteinExistence type="inferred from homology"/>
<gene>
    <name type="ORF">v1g244155</name>
</gene>
<feature type="chain" id="PRO_0000385197" description="Zinc finger CCCH-type with G patch domain-containing protein">
    <location>
        <begin position="1"/>
        <end position="508"/>
    </location>
</feature>
<feature type="domain" description="G-patch" evidence="2">
    <location>
        <begin position="310"/>
        <end position="356"/>
    </location>
</feature>
<feature type="zinc finger region" description="C3H1-type" evidence="3">
    <location>
        <begin position="161"/>
        <end position="188"/>
    </location>
</feature>
<feature type="region of interest" description="Disordered" evidence="4">
    <location>
        <begin position="67"/>
        <end position="86"/>
    </location>
</feature>
<feature type="region of interest" description="Disordered" evidence="4">
    <location>
        <begin position="253"/>
        <end position="282"/>
    </location>
</feature>
<feature type="region of interest" description="Disordered" evidence="4">
    <location>
        <begin position="404"/>
        <end position="426"/>
    </location>
</feature>
<feature type="compositionally biased region" description="Basic and acidic residues" evidence="4">
    <location>
        <begin position="69"/>
        <end position="86"/>
    </location>
</feature>
<feature type="compositionally biased region" description="Acidic residues" evidence="4">
    <location>
        <begin position="259"/>
        <end position="269"/>
    </location>
</feature>
<feature type="compositionally biased region" description="Low complexity" evidence="4">
    <location>
        <begin position="270"/>
        <end position="279"/>
    </location>
</feature>
<comment type="function">
    <text evidence="1">Transcription repressor.</text>
</comment>
<comment type="subcellular location">
    <subcellularLocation>
        <location evidence="1">Nucleus</location>
    </subcellularLocation>
</comment>
<protein>
    <recommendedName>
        <fullName>Zinc finger CCCH-type with G patch domain-containing protein</fullName>
    </recommendedName>
</protein>
<dbReference type="EMBL" id="DS469617">
    <property type="protein sequence ID" value="EDO38903.1"/>
    <property type="molecule type" value="Genomic_DNA"/>
</dbReference>
<dbReference type="SMR" id="A7SBN6"/>
<dbReference type="STRING" id="45351.A7SBN6"/>
<dbReference type="EnsemblMetazoa" id="EDO38903">
    <property type="protein sequence ID" value="EDO38903"/>
    <property type="gene ID" value="NEMVEDRAFT_v1g244155"/>
</dbReference>
<dbReference type="KEGG" id="nve:5510508"/>
<dbReference type="eggNOG" id="KOG2185">
    <property type="taxonomic scope" value="Eukaryota"/>
</dbReference>
<dbReference type="HOGENOM" id="CLU_040504_1_0_1"/>
<dbReference type="InParanoid" id="A7SBN6"/>
<dbReference type="OMA" id="QYTRGIG"/>
<dbReference type="OrthoDB" id="5842926at2759"/>
<dbReference type="PhylomeDB" id="A7SBN6"/>
<dbReference type="Proteomes" id="UP000001593">
    <property type="component" value="Unassembled WGS sequence"/>
</dbReference>
<dbReference type="GO" id="GO:0005634">
    <property type="term" value="C:nucleus"/>
    <property type="evidence" value="ECO:0000318"/>
    <property type="project" value="GO_Central"/>
</dbReference>
<dbReference type="GO" id="GO:0001227">
    <property type="term" value="F:DNA-binding transcription repressor activity, RNA polymerase II-specific"/>
    <property type="evidence" value="ECO:0000318"/>
    <property type="project" value="GO_Central"/>
</dbReference>
<dbReference type="GO" id="GO:0000978">
    <property type="term" value="F:RNA polymerase II cis-regulatory region sequence-specific DNA binding"/>
    <property type="evidence" value="ECO:0000318"/>
    <property type="project" value="GO_Central"/>
</dbReference>
<dbReference type="GO" id="GO:0008270">
    <property type="term" value="F:zinc ion binding"/>
    <property type="evidence" value="ECO:0007669"/>
    <property type="project" value="UniProtKB-KW"/>
</dbReference>
<dbReference type="GO" id="GO:0000122">
    <property type="term" value="P:negative regulation of transcription by RNA polymerase II"/>
    <property type="evidence" value="ECO:0000318"/>
    <property type="project" value="GO_Central"/>
</dbReference>
<dbReference type="CDD" id="cd20384">
    <property type="entry name" value="Tudor_ZGPAT"/>
    <property type="match status" value="1"/>
</dbReference>
<dbReference type="Gene3D" id="2.30.30.1190">
    <property type="match status" value="1"/>
</dbReference>
<dbReference type="Gene3D" id="2.30.30.140">
    <property type="match status" value="1"/>
</dbReference>
<dbReference type="InterPro" id="IPR000467">
    <property type="entry name" value="G_patch_dom"/>
</dbReference>
<dbReference type="InterPro" id="IPR002999">
    <property type="entry name" value="Tudor"/>
</dbReference>
<dbReference type="InterPro" id="IPR000571">
    <property type="entry name" value="Znf_CCCH"/>
</dbReference>
<dbReference type="PANTHER" id="PTHR46297">
    <property type="entry name" value="ZINC FINGER CCCH-TYPE WITH G PATCH DOMAIN-CONTAINING PROTEIN"/>
    <property type="match status" value="1"/>
</dbReference>
<dbReference type="PANTHER" id="PTHR46297:SF1">
    <property type="entry name" value="ZINC FINGER CCCH-TYPE WITH G PATCH DOMAIN-CONTAINING PROTEIN"/>
    <property type="match status" value="1"/>
</dbReference>
<dbReference type="Pfam" id="PF01585">
    <property type="entry name" value="G-patch"/>
    <property type="match status" value="1"/>
</dbReference>
<dbReference type="SMART" id="SM00443">
    <property type="entry name" value="G_patch"/>
    <property type="match status" value="1"/>
</dbReference>
<dbReference type="SMART" id="SM00333">
    <property type="entry name" value="TUDOR"/>
    <property type="match status" value="1"/>
</dbReference>
<dbReference type="SMART" id="SM00356">
    <property type="entry name" value="ZnF_C3H1"/>
    <property type="match status" value="1"/>
</dbReference>
<dbReference type="SUPFAM" id="SSF63748">
    <property type="entry name" value="Tudor/PWWP/MBT"/>
    <property type="match status" value="1"/>
</dbReference>
<dbReference type="PROSITE" id="PS50174">
    <property type="entry name" value="G_PATCH"/>
    <property type="match status" value="1"/>
</dbReference>
<dbReference type="PROSITE" id="PS50103">
    <property type="entry name" value="ZF_C3H1"/>
    <property type="match status" value="1"/>
</dbReference>
<evidence type="ECO:0000250" key="1"/>
<evidence type="ECO:0000255" key="2">
    <source>
        <dbReference type="PROSITE-ProRule" id="PRU00092"/>
    </source>
</evidence>
<evidence type="ECO:0000255" key="3">
    <source>
        <dbReference type="PROSITE-ProRule" id="PRU00723"/>
    </source>
</evidence>
<evidence type="ECO:0000256" key="4">
    <source>
        <dbReference type="SAM" id="MobiDB-lite"/>
    </source>
</evidence>
<name>ZGPAT_NEMVE</name>
<accession>A7SBN6</accession>
<reference key="1">
    <citation type="journal article" date="2007" name="Science">
        <title>Sea anemone genome reveals ancestral eumetazoan gene repertoire and genomic organization.</title>
        <authorList>
            <person name="Putnam N.H."/>
            <person name="Srivastava M."/>
            <person name="Hellsten U."/>
            <person name="Dirks B."/>
            <person name="Chapman J."/>
            <person name="Salamov A."/>
            <person name="Terry A."/>
            <person name="Shapiro H."/>
            <person name="Lindquist E."/>
            <person name="Kapitonov V.V."/>
            <person name="Jurka J."/>
            <person name="Genikhovich G."/>
            <person name="Grigoriev I.V."/>
            <person name="Lucas S.M."/>
            <person name="Steele R.E."/>
            <person name="Finnerty J.R."/>
            <person name="Technau U."/>
            <person name="Martindale M.Q."/>
            <person name="Rokhsar D.S."/>
        </authorList>
    </citation>
    <scope>NUCLEOTIDE SEQUENCE [LARGE SCALE GENOMIC DNA]</scope>
    <source>
        <strain>CH2 X CH6</strain>
    </source>
</reference>
<organism>
    <name type="scientific">Nematostella vectensis</name>
    <name type="common">Starlet sea anemone</name>
    <dbReference type="NCBI Taxonomy" id="45351"/>
    <lineage>
        <taxon>Eukaryota</taxon>
        <taxon>Metazoa</taxon>
        <taxon>Cnidaria</taxon>
        <taxon>Anthozoa</taxon>
        <taxon>Hexacorallia</taxon>
        <taxon>Actiniaria</taxon>
        <taxon>Edwardsiidae</taxon>
        <taxon>Nematostella</taxon>
    </lineage>
</organism>
<keyword id="KW-0238">DNA-binding</keyword>
<keyword id="KW-0479">Metal-binding</keyword>
<keyword id="KW-0539">Nucleus</keyword>
<keyword id="KW-1185">Reference proteome</keyword>
<keyword id="KW-0678">Repressor</keyword>
<keyword id="KW-0804">Transcription</keyword>
<keyword id="KW-0805">Transcription regulation</keyword>
<keyword id="KW-0862">Zinc</keyword>
<keyword id="KW-0863">Zinc-finger</keyword>
<sequence>MDEDVLKEAIEQYKQQIIQIQTVLESGQIEGRAELAKLKDDLTELIQVTEESLLSLKKSQLLQLLEQQESSHHDSGTPETDTKTSVDYRNSYVNDHTIDDNDDEDNDENIIGTKCRVAFTQEWGVKEHHNAMVFKLESIPLDEETVDQAKVRVLFLNPTHRSMVPCPYFLEGKCKFAGAECRFSHGYLVDVEHLKPFKEPDFSSVKAGQRCLARYSDGVWYNSTIKSIKHESHEFLIHYETYNTDATLPLDDIYPLGPEEVESDSESDSQSDTGDSSSSKAAIEQDDDVIRYAWKPTGALSSLGDWEQHTKGIGSKLMAKMGYIFGKGLGKDGEGRVEPIEVVVLPQGKSLDKCAELREKNKLKEPFKRKKKKLVVASTTSASQGKASDVFDFINHKLGHSKGSLHDLRVSHPGAKPDIRKTRKSADENTNWNIQLFKIHEEISSVKKQLNKQEEALQRHTTRDSRNKTIFTEKRDSVHNRLQELLKKEKKIQEKIHQKDQHRKLTVF</sequence>